<dbReference type="EMBL" id="D88441">
    <property type="protein sequence ID" value="BAA13612.1"/>
    <property type="molecule type" value="mRNA"/>
</dbReference>
<evidence type="ECO:0000255" key="1"/>
<evidence type="ECO:0000269" key="2">
    <source>
    </source>
</evidence>
<evidence type="ECO:0000269" key="3">
    <source>
    </source>
</evidence>
<evidence type="ECO:0000303" key="4">
    <source>
    </source>
</evidence>
<evidence type="ECO:0000303" key="5">
    <source ref="1"/>
</evidence>
<evidence type="ECO:0000305" key="6">
    <source>
    </source>
</evidence>
<organism>
    <name type="scientific">Flammulina velutipes</name>
    <name type="common">Agaricus velutipes</name>
    <dbReference type="NCBI Taxonomy" id="38945"/>
    <lineage>
        <taxon>Eukaryota</taxon>
        <taxon>Fungi</taxon>
        <taxon>Dikarya</taxon>
        <taxon>Basidiomycota</taxon>
        <taxon>Agaricomycotina</taxon>
        <taxon>Agaricomycetes</taxon>
        <taxon>Agaricomycetidae</taxon>
        <taxon>Agaricales</taxon>
        <taxon>Marasmiineae</taxon>
        <taxon>Physalacriaceae</taxon>
        <taxon>Flammulina</taxon>
    </lineage>
</organism>
<comment type="function">
    <text evidence="6">Plays a role in the regulation of fruiting body development.</text>
</comment>
<comment type="induction">
    <text evidence="2 3">Expression is negatively regulated by the basidioma development repressor lfc1 (PubMed:32356196). Expression is positively regulated by the cross-pathway control WD-repeat protein 2 (CPC2) during fruiting body development.</text>
</comment>
<accession>Q92234</accession>
<sequence length="128" mass="13518">MLFSHIVFVALSVFGLVQAIPSPLAKEGVVERATNADVTGVLNTLKGRTDTILPQINALVASGNVNDRNVKPLFDQLSSALKTADASLGKFKAQGSLAGKTRTRSLLLVPTSSRTSTPLSRRSPSTSR</sequence>
<gene>
    <name evidence="5" type="primary">FVFD16</name>
</gene>
<proteinExistence type="evidence at transcript level"/>
<keyword id="KW-0732">Signal</keyword>
<reference key="1">
    <citation type="submission" date="1996-10" db="EMBL/GenBank/DDBJ databases">
        <title>Isolation of an abundantly expressed gene during fruiting body differentiation in Flammulina velutipes.</title>
        <authorList>
            <person name="Kim D."/>
            <person name="Azuma T."/>
            <person name="Harada A."/>
            <person name="Sakuma Y."/>
            <person name="Miura K."/>
        </authorList>
    </citation>
    <scope>NUCLEOTIDE SEQUENCE [MRNA]</scope>
    <source>
        <strain>Fv-4</strain>
    </source>
</reference>
<reference key="2">
    <citation type="journal article" date="2020" name="Appl. Microbiol. Biotechnol.">
        <title>A putative transcription factor LFC1 negatively regulates development and yield of winter mushroom.</title>
        <authorList>
            <person name="Wu T."/>
            <person name="Hu C."/>
            <person name="Xie B."/>
            <person name="Wei S."/>
            <person name="Zhang L."/>
            <person name="Zhu Z."/>
            <person name="Zhang Z."/>
            <person name="Li S."/>
        </authorList>
    </citation>
    <scope>INDUCTION</scope>
</reference>
<reference key="3">
    <citation type="journal article" date="2020" name="Front. Microbiol.">
        <title>A WD40 Protein Encoding Gene Fvcpc2 Positively Regulates Mushroom Development and Yield in Flammulina velutipes.</title>
        <authorList>
            <person name="Wu T."/>
            <person name="Zhang Z."/>
            <person name="Hu C."/>
            <person name="Zhang L."/>
            <person name="Wei S."/>
            <person name="Li S."/>
        </authorList>
    </citation>
    <scope>INDUCTION</scope>
    <scope>FUNCTION</scope>
</reference>
<name>FD16_FLAVE</name>
<protein>
    <recommendedName>
        <fullName evidence="4">Fruiting body differentiation protein 16</fullName>
    </recommendedName>
</protein>
<feature type="signal peptide" evidence="1">
    <location>
        <begin position="1"/>
        <end position="19"/>
    </location>
</feature>
<feature type="chain" id="PRO_5004318897" description="Fruiting body differentiation protein 16">
    <location>
        <begin position="20"/>
        <end position="128"/>
    </location>
</feature>